<proteinExistence type="inferred from homology"/>
<organism>
    <name type="scientific">Atropa belladonna</name>
    <name type="common">Belladonna</name>
    <name type="synonym">Deadly nightshade</name>
    <dbReference type="NCBI Taxonomy" id="33113"/>
    <lineage>
        <taxon>Eukaryota</taxon>
        <taxon>Viridiplantae</taxon>
        <taxon>Streptophyta</taxon>
        <taxon>Embryophyta</taxon>
        <taxon>Tracheophyta</taxon>
        <taxon>Spermatophyta</taxon>
        <taxon>Magnoliopsida</taxon>
        <taxon>eudicotyledons</taxon>
        <taxon>Gunneridae</taxon>
        <taxon>Pentapetalae</taxon>
        <taxon>asterids</taxon>
        <taxon>lamiids</taxon>
        <taxon>Solanales</taxon>
        <taxon>Solanaceae</taxon>
        <taxon>Solanoideae</taxon>
        <taxon>Hyoscyameae</taxon>
        <taxon>Atropa</taxon>
    </lineage>
</organism>
<sequence>MVREKVTVSTRTLQWKCVESRTDSKRLYYGRFILSPLMKGQADTIGIAMRRALLGEIEGTCITRVKFEKVPHEYSTITGIQESVHEIIMNLKEIVLRSNLYGTSEASVCVKGPGYVTAQDIILPPYVEIVDNTQHIASLTEPIDFCIGLQIERNRGYLIKTPQNFQDGSYPIDAVFMPVRNANHSIHSYGNGNEKQEILFLEIWTNGSLTPKEALHEASRNLIDLFIPFLHMEEDNLYLQDNQHTVPLSPFTFHDKLAKLIKNNKKIALKSIFIDQSELPSRIYNCLKMSNIYTLLDLLNNSQEDLMKIEHFRSEDIKQILGILEKYFVIDLAKNKF</sequence>
<protein>
    <recommendedName>
        <fullName evidence="1">DNA-directed RNA polymerase subunit alpha</fullName>
        <shortName evidence="1">PEP</shortName>
        <ecNumber evidence="1">2.7.7.6</ecNumber>
    </recommendedName>
    <alternativeName>
        <fullName evidence="1">Plastid-encoded RNA polymerase subunit alpha</fullName>
        <shortName evidence="1">RNA polymerase subunit alpha</shortName>
    </alternativeName>
</protein>
<dbReference type="EC" id="2.7.7.6" evidence="1"/>
<dbReference type="EMBL" id="AJ316582">
    <property type="protein sequence ID" value="CAC88076.1"/>
    <property type="molecule type" value="Genomic_DNA"/>
</dbReference>
<dbReference type="RefSeq" id="NP_783263.1">
    <property type="nucleotide sequence ID" value="NC_004561.1"/>
</dbReference>
<dbReference type="SMR" id="Q8S8V9"/>
<dbReference type="GeneID" id="806545"/>
<dbReference type="GO" id="GO:0009507">
    <property type="term" value="C:chloroplast"/>
    <property type="evidence" value="ECO:0007669"/>
    <property type="project" value="UniProtKB-SubCell"/>
</dbReference>
<dbReference type="GO" id="GO:0000428">
    <property type="term" value="C:DNA-directed RNA polymerase complex"/>
    <property type="evidence" value="ECO:0007669"/>
    <property type="project" value="UniProtKB-KW"/>
</dbReference>
<dbReference type="GO" id="GO:0005739">
    <property type="term" value="C:mitochondrion"/>
    <property type="evidence" value="ECO:0007669"/>
    <property type="project" value="GOC"/>
</dbReference>
<dbReference type="GO" id="GO:0003677">
    <property type="term" value="F:DNA binding"/>
    <property type="evidence" value="ECO:0007669"/>
    <property type="project" value="UniProtKB-UniRule"/>
</dbReference>
<dbReference type="GO" id="GO:0003899">
    <property type="term" value="F:DNA-directed RNA polymerase activity"/>
    <property type="evidence" value="ECO:0007669"/>
    <property type="project" value="UniProtKB-UniRule"/>
</dbReference>
<dbReference type="GO" id="GO:0046983">
    <property type="term" value="F:protein dimerization activity"/>
    <property type="evidence" value="ECO:0007669"/>
    <property type="project" value="InterPro"/>
</dbReference>
<dbReference type="GO" id="GO:0006351">
    <property type="term" value="P:DNA-templated transcription"/>
    <property type="evidence" value="ECO:0007669"/>
    <property type="project" value="UniProtKB-UniRule"/>
</dbReference>
<dbReference type="CDD" id="cd06928">
    <property type="entry name" value="RNAP_alpha_NTD"/>
    <property type="match status" value="1"/>
</dbReference>
<dbReference type="FunFam" id="1.10.150.20:FF:000021">
    <property type="entry name" value="DNA-directed RNA polymerase subunit alpha"/>
    <property type="match status" value="1"/>
</dbReference>
<dbReference type="FunFam" id="2.170.120.12:FF:000001">
    <property type="entry name" value="DNA-directed RNA polymerase subunit alpha"/>
    <property type="match status" value="1"/>
</dbReference>
<dbReference type="FunFam" id="3.30.1360.10:FF:000039">
    <property type="entry name" value="DNA-directed RNA polymerase subunit alpha"/>
    <property type="match status" value="1"/>
</dbReference>
<dbReference type="Gene3D" id="1.10.150.20">
    <property type="entry name" value="5' to 3' exonuclease, C-terminal subdomain"/>
    <property type="match status" value="1"/>
</dbReference>
<dbReference type="Gene3D" id="2.170.120.12">
    <property type="entry name" value="DNA-directed RNA polymerase, insert domain"/>
    <property type="match status" value="1"/>
</dbReference>
<dbReference type="Gene3D" id="3.30.1360.10">
    <property type="entry name" value="RNA polymerase, RBP11-like subunit"/>
    <property type="match status" value="1"/>
</dbReference>
<dbReference type="HAMAP" id="MF_00059">
    <property type="entry name" value="RNApol_bact_RpoA"/>
    <property type="match status" value="1"/>
</dbReference>
<dbReference type="InterPro" id="IPR011262">
    <property type="entry name" value="DNA-dir_RNA_pol_insert"/>
</dbReference>
<dbReference type="InterPro" id="IPR011263">
    <property type="entry name" value="DNA-dir_RNA_pol_RpoA/D/Rpb3"/>
</dbReference>
<dbReference type="InterPro" id="IPR011773">
    <property type="entry name" value="DNA-dir_RpoA"/>
</dbReference>
<dbReference type="InterPro" id="IPR036603">
    <property type="entry name" value="RBP11-like"/>
</dbReference>
<dbReference type="InterPro" id="IPR011260">
    <property type="entry name" value="RNAP_asu_C"/>
</dbReference>
<dbReference type="InterPro" id="IPR036643">
    <property type="entry name" value="RNApol_insert_sf"/>
</dbReference>
<dbReference type="NCBIfam" id="TIGR02027">
    <property type="entry name" value="rpoA"/>
    <property type="match status" value="1"/>
</dbReference>
<dbReference type="Pfam" id="PF01000">
    <property type="entry name" value="RNA_pol_A_bac"/>
    <property type="match status" value="1"/>
</dbReference>
<dbReference type="Pfam" id="PF03118">
    <property type="entry name" value="RNA_pol_A_CTD"/>
    <property type="match status" value="1"/>
</dbReference>
<dbReference type="Pfam" id="PF01193">
    <property type="entry name" value="RNA_pol_L"/>
    <property type="match status" value="1"/>
</dbReference>
<dbReference type="SMART" id="SM00662">
    <property type="entry name" value="RPOLD"/>
    <property type="match status" value="1"/>
</dbReference>
<dbReference type="SUPFAM" id="SSF47789">
    <property type="entry name" value="C-terminal domain of RNA polymerase alpha subunit"/>
    <property type="match status" value="1"/>
</dbReference>
<dbReference type="SUPFAM" id="SSF56553">
    <property type="entry name" value="Insert subdomain of RNA polymerase alpha subunit"/>
    <property type="match status" value="1"/>
</dbReference>
<dbReference type="SUPFAM" id="SSF55257">
    <property type="entry name" value="RBP11-like subunits of RNA polymerase"/>
    <property type="match status" value="1"/>
</dbReference>
<gene>
    <name evidence="1" type="primary">rpoA</name>
</gene>
<name>RPOA_ATRBE</name>
<keyword id="KW-0150">Chloroplast</keyword>
<keyword id="KW-0240">DNA-directed RNA polymerase</keyword>
<keyword id="KW-0548">Nucleotidyltransferase</keyword>
<keyword id="KW-0934">Plastid</keyword>
<keyword id="KW-0804">Transcription</keyword>
<keyword id="KW-0808">Transferase</keyword>
<accession>Q8S8V9</accession>
<comment type="function">
    <text evidence="1">DNA-dependent RNA polymerase catalyzes the transcription of DNA into RNA using the four ribonucleoside triphosphates as substrates.</text>
</comment>
<comment type="catalytic activity">
    <reaction evidence="1">
        <text>RNA(n) + a ribonucleoside 5'-triphosphate = RNA(n+1) + diphosphate</text>
        <dbReference type="Rhea" id="RHEA:21248"/>
        <dbReference type="Rhea" id="RHEA-COMP:14527"/>
        <dbReference type="Rhea" id="RHEA-COMP:17342"/>
        <dbReference type="ChEBI" id="CHEBI:33019"/>
        <dbReference type="ChEBI" id="CHEBI:61557"/>
        <dbReference type="ChEBI" id="CHEBI:140395"/>
        <dbReference type="EC" id="2.7.7.6"/>
    </reaction>
</comment>
<comment type="subunit">
    <text evidence="1">In plastids the minimal PEP RNA polymerase catalytic core is composed of four subunits: alpha, beta, beta', and beta''. When a (nuclear-encoded) sigma factor is associated with the core the holoenzyme is formed, which can initiate transcription.</text>
</comment>
<comment type="subcellular location">
    <subcellularLocation>
        <location>Plastid</location>
        <location>Chloroplast</location>
    </subcellularLocation>
</comment>
<comment type="domain">
    <text evidence="1">The N-terminal domain is essential for RNAP assembly and basal transcription, whereas the C-terminal domain is involved in interaction with transcriptional regulators and with upstream promoter elements.</text>
</comment>
<comment type="similarity">
    <text evidence="1">Belongs to the RNA polymerase alpha chain family.</text>
</comment>
<geneLocation type="chloroplast"/>
<reference key="1">
    <citation type="journal article" date="2002" name="Mol. Biol. Evol.">
        <title>The plastid chromosome of Atropa belladonna and its comparison with that of Nicotiana tabacum: the role of RNA editing in generating divergence in the process of plant speciation.</title>
        <authorList>
            <person name="Schmitz-Linneweber C."/>
            <person name="Regel R."/>
            <person name="Du T.G."/>
            <person name="Hupfer H."/>
            <person name="Herrmann R.G."/>
            <person name="Maier R.M."/>
        </authorList>
    </citation>
    <scope>NUCLEOTIDE SEQUENCE [LARGE SCALE GENOMIC DNA]</scope>
    <source>
        <strain>cv. Ab5p(kan)</strain>
    </source>
</reference>
<evidence type="ECO:0000255" key="1">
    <source>
        <dbReference type="HAMAP-Rule" id="MF_00059"/>
    </source>
</evidence>
<feature type="chain" id="PRO_0000175441" description="DNA-directed RNA polymerase subunit alpha">
    <location>
        <begin position="1"/>
        <end position="337"/>
    </location>
</feature>
<feature type="region of interest" description="Alpha N-terminal domain (alpha-NTD)" evidence="1">
    <location>
        <begin position="1"/>
        <end position="233"/>
    </location>
</feature>
<feature type="region of interest" description="Alpha C-terminal domain (alpha-CTD)" evidence="1">
    <location>
        <begin position="264"/>
        <end position="337"/>
    </location>
</feature>